<reference key="1">
    <citation type="journal article" date="2003" name="Nature">
        <title>Yeast genome duplication was followed by asynchronous differentiation of duplicated genes.</title>
        <authorList>
            <person name="Langkjaer R.B."/>
            <person name="Cliften P.F."/>
            <person name="Johnston M."/>
            <person name="Piskur J."/>
        </authorList>
    </citation>
    <scope>NUCLEOTIDE SEQUENCE [GENOMIC DNA]</scope>
    <source>
        <strain>623-6C / CBS 9787 / CLIB 533</strain>
    </source>
</reference>
<feature type="chain" id="PRO_0000330041" description="General amino acid permease AGP1">
    <location>
        <begin position="1"/>
        <end position="633"/>
    </location>
</feature>
<feature type="topological domain" description="Cytoplasmic" evidence="2">
    <location>
        <begin position="1"/>
        <end position="124"/>
    </location>
</feature>
<feature type="transmembrane region" description="Helical" evidence="2">
    <location>
        <begin position="125"/>
        <end position="145"/>
    </location>
</feature>
<feature type="topological domain" description="Extracellular" evidence="2">
    <location>
        <begin position="146"/>
        <end position="148"/>
    </location>
</feature>
<feature type="transmembrane region" description="Helical" evidence="2">
    <location>
        <begin position="149"/>
        <end position="169"/>
    </location>
</feature>
<feature type="topological domain" description="Cytoplasmic" evidence="2">
    <location>
        <begin position="170"/>
        <end position="197"/>
    </location>
</feature>
<feature type="transmembrane region" description="Helical" evidence="2">
    <location>
        <begin position="198"/>
        <end position="218"/>
    </location>
</feature>
<feature type="topological domain" description="Extracellular" evidence="2">
    <location>
        <begin position="219"/>
        <end position="231"/>
    </location>
</feature>
<feature type="transmembrane region" description="Helical" evidence="2">
    <location>
        <begin position="232"/>
        <end position="252"/>
    </location>
</feature>
<feature type="topological domain" description="Cytoplasmic" evidence="2">
    <location>
        <begin position="253"/>
        <end position="260"/>
    </location>
</feature>
<feature type="transmembrane region" description="Helical" evidence="2">
    <location>
        <begin position="261"/>
        <end position="281"/>
    </location>
</feature>
<feature type="topological domain" description="Extracellular" evidence="2">
    <location>
        <begin position="282"/>
        <end position="313"/>
    </location>
</feature>
<feature type="transmembrane region" description="Helical" evidence="2">
    <location>
        <begin position="314"/>
        <end position="334"/>
    </location>
</feature>
<feature type="topological domain" description="Cytoplasmic" evidence="2">
    <location>
        <begin position="335"/>
        <end position="352"/>
    </location>
</feature>
<feature type="transmembrane region" description="Helical" evidence="2">
    <location>
        <begin position="353"/>
        <end position="373"/>
    </location>
</feature>
<feature type="topological domain" description="Extracellular" evidence="2">
    <location>
        <begin position="374"/>
        <end position="392"/>
    </location>
</feature>
<feature type="transmembrane region" description="Helical" evidence="2">
    <location>
        <begin position="393"/>
        <end position="413"/>
    </location>
</feature>
<feature type="topological domain" description="Cytoplasmic" evidence="2">
    <location>
        <begin position="414"/>
        <end position="452"/>
    </location>
</feature>
<feature type="transmembrane region" description="Helical" evidence="2">
    <location>
        <begin position="453"/>
        <end position="473"/>
    </location>
</feature>
<feature type="topological domain" description="Extracellular" evidence="2">
    <location>
        <begin position="474"/>
        <end position="477"/>
    </location>
</feature>
<feature type="transmembrane region" description="Helical" evidence="2">
    <location>
        <begin position="478"/>
        <end position="498"/>
    </location>
</feature>
<feature type="topological domain" description="Cytoplasmic" evidence="2">
    <location>
        <begin position="499"/>
        <end position="531"/>
    </location>
</feature>
<feature type="transmembrane region" description="Helical" evidence="2">
    <location>
        <begin position="532"/>
        <end position="552"/>
    </location>
</feature>
<feature type="topological domain" description="Extracellular" evidence="2">
    <location>
        <begin position="553"/>
        <end position="557"/>
    </location>
</feature>
<feature type="transmembrane region" description="Helical" evidence="2">
    <location>
        <begin position="558"/>
        <end position="578"/>
    </location>
</feature>
<feature type="topological domain" description="Cytoplasmic" evidence="2">
    <location>
        <begin position="579"/>
        <end position="633"/>
    </location>
</feature>
<feature type="region of interest" description="Disordered" evidence="3">
    <location>
        <begin position="1"/>
        <end position="52"/>
    </location>
</feature>
<feature type="region of interest" description="Disordered" evidence="3">
    <location>
        <begin position="81"/>
        <end position="116"/>
    </location>
</feature>
<feature type="compositionally biased region" description="Acidic residues" evidence="3">
    <location>
        <begin position="25"/>
        <end position="35"/>
    </location>
</feature>
<feature type="compositionally biased region" description="Polar residues" evidence="3">
    <location>
        <begin position="81"/>
        <end position="91"/>
    </location>
</feature>
<feature type="compositionally biased region" description="Basic and acidic residues" evidence="3">
    <location>
        <begin position="92"/>
        <end position="116"/>
    </location>
</feature>
<feature type="lipid moiety-binding region" description="S-palmitoyl cysteine" evidence="1">
    <location>
        <position position="633"/>
    </location>
</feature>
<dbReference type="EMBL" id="AY144805">
    <property type="protein sequence ID" value="AAO32369.1"/>
    <property type="molecule type" value="Genomic_DNA"/>
</dbReference>
<dbReference type="SMR" id="Q876K6"/>
<dbReference type="GO" id="GO:0005886">
    <property type="term" value="C:plasma membrane"/>
    <property type="evidence" value="ECO:0007669"/>
    <property type="project" value="UniProtKB-SubCell"/>
</dbReference>
<dbReference type="GO" id="GO:0015171">
    <property type="term" value="F:amino acid transmembrane transporter activity"/>
    <property type="evidence" value="ECO:0007669"/>
    <property type="project" value="TreeGrafter"/>
</dbReference>
<dbReference type="FunFam" id="1.20.1740.10:FF:000017">
    <property type="entry name" value="Amino acid permease"/>
    <property type="match status" value="1"/>
</dbReference>
<dbReference type="Gene3D" id="1.20.1740.10">
    <property type="entry name" value="Amino acid/polyamine transporter I"/>
    <property type="match status" value="1"/>
</dbReference>
<dbReference type="InterPro" id="IPR004841">
    <property type="entry name" value="AA-permease/SLC12A_dom"/>
</dbReference>
<dbReference type="InterPro" id="IPR004840">
    <property type="entry name" value="Amino_acid_permease_CS"/>
</dbReference>
<dbReference type="InterPro" id="IPR004762">
    <property type="entry name" value="Amino_acid_permease_fungi"/>
</dbReference>
<dbReference type="InterPro" id="IPR050524">
    <property type="entry name" value="APC_YAT"/>
</dbReference>
<dbReference type="NCBIfam" id="TIGR00913">
    <property type="entry name" value="2A0310"/>
    <property type="match status" value="1"/>
</dbReference>
<dbReference type="PANTHER" id="PTHR43341">
    <property type="entry name" value="AMINO ACID PERMEASE"/>
    <property type="match status" value="1"/>
</dbReference>
<dbReference type="PANTHER" id="PTHR43341:SF17">
    <property type="entry name" value="GENERAL AMINO ACID PERMEASE AGP1-RELATED"/>
    <property type="match status" value="1"/>
</dbReference>
<dbReference type="Pfam" id="PF00324">
    <property type="entry name" value="AA_permease"/>
    <property type="match status" value="1"/>
</dbReference>
<dbReference type="PROSITE" id="PS00218">
    <property type="entry name" value="AMINO_ACID_PERMEASE_1"/>
    <property type="match status" value="1"/>
</dbReference>
<evidence type="ECO:0000250" key="1"/>
<evidence type="ECO:0000255" key="2"/>
<evidence type="ECO:0000256" key="3">
    <source>
        <dbReference type="SAM" id="MobiDB-lite"/>
    </source>
</evidence>
<evidence type="ECO:0000305" key="4"/>
<protein>
    <recommendedName>
        <fullName>General amino acid permease AGP1</fullName>
    </recommendedName>
    <alternativeName>
        <fullName>Asparagine/glutamine permease</fullName>
    </alternativeName>
</protein>
<name>AGP1_SACU7</name>
<comment type="function">
    <text evidence="1">Broad substrate range permease which transports asparagine and glutamine with intermediate specificity. Also transports Ala, Cys, Gly, Ser, Thr, Cys, Met, Phe, Tyr, Ile, Leu and Val. Important for the utilization of amino acids as a nitrogen source (By similarity).</text>
</comment>
<comment type="subcellular location">
    <subcellularLocation>
        <location evidence="1">Cell membrane</location>
        <topology evidence="1">Multi-pass membrane protein</topology>
    </subcellularLocation>
</comment>
<comment type="similarity">
    <text evidence="4">Belongs to the amino acid-polyamine-organocation (APC) superfamily. YAT (TC 2.A.3.10) family.</text>
</comment>
<sequence length="633" mass="70083">MSSSTSPYELKDLKNSSTEVHAAEQENEIEYFETDSNDRPSQQPHLDYEQHNTSAVRRFLDSFKRADQDQEQEAEVAQMNDLTSAISPSSRQAHELEKDETTDKIAPHTGHKSDSLKKTIQPRHVLMIALGTGIGTGLLVGNGTALVHAGPAGLLIGYAIMGSILYCIIQACGEMALVYSNLTGGYNAYPSFLVDDGFGFAVAWVYCLQWLCVCPLELVTASMTIKYWTTSVNPDVFVIIFYVLVITINIFGARGYAEAEFFFNCCKILMMTGFFILGIIIDVGGAGNDGYIGGKYWHEPGAFNGVHAIDRFKGVVATLVTAAFAFGGSEFIAITTAEQSNPRKAIPGAAKQMIYRILFLFLATIIIVGFLVPYNSDQLLGSSGGGTKASPYVIAIASHGVRVAPHFVNAVILLSVLSMANSSFYSSARLFLTLSEQGYAPKIFSYIDRAGRPLIAMCVSALFAVIAFCAASPKEDQVFTWLLAISGLSQLFTWTAICLSHIRFRRAMKVQGRSLGELGFKSQTGVWGSIYSCIMMILILIGQFWVAIAPIGEGKLDAQAFFENYLAMPILIVLYVGYKMWNKDWKLFIRADKIDLTSHRQIFDEELIKQEDDEYRERLRTGPYWRRVLAFWC</sequence>
<proteinExistence type="inferred from homology"/>
<accession>Q876K6</accession>
<organism>
    <name type="scientific">Saccharomyces uvarum (strain ATCC 76518 / CBS 7001 / CLIB 283 / NBRC 10550 / MCYC 623 / NCYC 2669 / NRRL Y-11845)</name>
    <name type="common">Yeast</name>
    <name type="synonym">Saccharomyces bayanus var. uvarum</name>
    <dbReference type="NCBI Taxonomy" id="659244"/>
    <lineage>
        <taxon>Eukaryota</taxon>
        <taxon>Fungi</taxon>
        <taxon>Dikarya</taxon>
        <taxon>Ascomycota</taxon>
        <taxon>Saccharomycotina</taxon>
        <taxon>Saccharomycetes</taxon>
        <taxon>Saccharomycetales</taxon>
        <taxon>Saccharomycetaceae</taxon>
        <taxon>Saccharomyces</taxon>
    </lineage>
</organism>
<gene>
    <name type="primary">AGP1</name>
</gene>
<keyword id="KW-0029">Amino-acid transport</keyword>
<keyword id="KW-1003">Cell membrane</keyword>
<keyword id="KW-0449">Lipoprotein</keyword>
<keyword id="KW-0472">Membrane</keyword>
<keyword id="KW-0564">Palmitate</keyword>
<keyword id="KW-0812">Transmembrane</keyword>
<keyword id="KW-1133">Transmembrane helix</keyword>
<keyword id="KW-0813">Transport</keyword>